<organism>
    <name type="scientific">Sinorhizobium medicae (strain WSM419)</name>
    <name type="common">Ensifer medicae</name>
    <dbReference type="NCBI Taxonomy" id="366394"/>
    <lineage>
        <taxon>Bacteria</taxon>
        <taxon>Pseudomonadati</taxon>
        <taxon>Pseudomonadota</taxon>
        <taxon>Alphaproteobacteria</taxon>
        <taxon>Hyphomicrobiales</taxon>
        <taxon>Rhizobiaceae</taxon>
        <taxon>Sinorhizobium/Ensifer group</taxon>
        <taxon>Sinorhizobium</taxon>
    </lineage>
</organism>
<reference key="1">
    <citation type="submission" date="2007-06" db="EMBL/GenBank/DDBJ databases">
        <title>Complete sequence of Sinorhizobium medicae WSM419 chromosome.</title>
        <authorList>
            <consortium name="US DOE Joint Genome Institute"/>
            <person name="Copeland A."/>
            <person name="Lucas S."/>
            <person name="Lapidus A."/>
            <person name="Barry K."/>
            <person name="Glavina del Rio T."/>
            <person name="Dalin E."/>
            <person name="Tice H."/>
            <person name="Pitluck S."/>
            <person name="Chain P."/>
            <person name="Malfatti S."/>
            <person name="Shin M."/>
            <person name="Vergez L."/>
            <person name="Schmutz J."/>
            <person name="Larimer F."/>
            <person name="Land M."/>
            <person name="Hauser L."/>
            <person name="Kyrpides N."/>
            <person name="Mikhailova N."/>
            <person name="Reeve W.G."/>
            <person name="Richardson P."/>
        </authorList>
    </citation>
    <scope>NUCLEOTIDE SEQUENCE [LARGE SCALE GENOMIC DNA]</scope>
    <source>
        <strain>WSM419</strain>
    </source>
</reference>
<keyword id="KW-0687">Ribonucleoprotein</keyword>
<keyword id="KW-0689">Ribosomal protein</keyword>
<accession>A6UCK6</accession>
<feature type="chain" id="PRO_1000007359" description="Large ribosomal subunit protein bL28">
    <location>
        <begin position="1"/>
        <end position="96"/>
    </location>
</feature>
<feature type="region of interest" description="Disordered" evidence="2">
    <location>
        <begin position="1"/>
        <end position="24"/>
    </location>
</feature>
<feature type="compositionally biased region" description="Polar residues" evidence="2">
    <location>
        <begin position="1"/>
        <end position="22"/>
    </location>
</feature>
<protein>
    <recommendedName>
        <fullName evidence="1">Large ribosomal subunit protein bL28</fullName>
    </recommendedName>
    <alternativeName>
        <fullName evidence="3">50S ribosomal protein L28</fullName>
    </alternativeName>
</protein>
<comment type="similarity">
    <text evidence="1">Belongs to the bacterial ribosomal protein bL28 family.</text>
</comment>
<name>RL28_SINMW</name>
<evidence type="ECO:0000255" key="1">
    <source>
        <dbReference type="HAMAP-Rule" id="MF_00373"/>
    </source>
</evidence>
<evidence type="ECO:0000256" key="2">
    <source>
        <dbReference type="SAM" id="MobiDB-lite"/>
    </source>
</evidence>
<evidence type="ECO:0000305" key="3"/>
<proteinExistence type="inferred from homology"/>
<dbReference type="EMBL" id="CP000738">
    <property type="protein sequence ID" value="ABR61386.1"/>
    <property type="molecule type" value="Genomic_DNA"/>
</dbReference>
<dbReference type="RefSeq" id="WP_012066777.1">
    <property type="nucleotide sequence ID" value="NC_009636.1"/>
</dbReference>
<dbReference type="RefSeq" id="YP_001328221.1">
    <property type="nucleotide sequence ID" value="NC_009636.1"/>
</dbReference>
<dbReference type="SMR" id="A6UCK6"/>
<dbReference type="STRING" id="366394.Smed_2556"/>
<dbReference type="GeneID" id="61611916"/>
<dbReference type="KEGG" id="smd:Smed_2556"/>
<dbReference type="PATRIC" id="fig|366394.8.peg.5748"/>
<dbReference type="eggNOG" id="COG0227">
    <property type="taxonomic scope" value="Bacteria"/>
</dbReference>
<dbReference type="HOGENOM" id="CLU_064548_4_2_5"/>
<dbReference type="OrthoDB" id="9805609at2"/>
<dbReference type="Proteomes" id="UP000001108">
    <property type="component" value="Chromosome"/>
</dbReference>
<dbReference type="GO" id="GO:0022625">
    <property type="term" value="C:cytosolic large ribosomal subunit"/>
    <property type="evidence" value="ECO:0007669"/>
    <property type="project" value="TreeGrafter"/>
</dbReference>
<dbReference type="GO" id="GO:0003735">
    <property type="term" value="F:structural constituent of ribosome"/>
    <property type="evidence" value="ECO:0007669"/>
    <property type="project" value="InterPro"/>
</dbReference>
<dbReference type="GO" id="GO:0006412">
    <property type="term" value="P:translation"/>
    <property type="evidence" value="ECO:0007669"/>
    <property type="project" value="UniProtKB-UniRule"/>
</dbReference>
<dbReference type="Gene3D" id="2.30.170.40">
    <property type="entry name" value="Ribosomal protein L28/L24"/>
    <property type="match status" value="1"/>
</dbReference>
<dbReference type="HAMAP" id="MF_00373">
    <property type="entry name" value="Ribosomal_bL28"/>
    <property type="match status" value="1"/>
</dbReference>
<dbReference type="InterPro" id="IPR026569">
    <property type="entry name" value="Ribosomal_bL28"/>
</dbReference>
<dbReference type="InterPro" id="IPR034704">
    <property type="entry name" value="Ribosomal_bL28/bL31-like_sf"/>
</dbReference>
<dbReference type="InterPro" id="IPR001383">
    <property type="entry name" value="Ribosomal_bL28_bact-type"/>
</dbReference>
<dbReference type="InterPro" id="IPR037147">
    <property type="entry name" value="Ribosomal_bL28_sf"/>
</dbReference>
<dbReference type="NCBIfam" id="TIGR00009">
    <property type="entry name" value="L28"/>
    <property type="match status" value="1"/>
</dbReference>
<dbReference type="PANTHER" id="PTHR13528">
    <property type="entry name" value="39S RIBOSOMAL PROTEIN L28, MITOCHONDRIAL"/>
    <property type="match status" value="1"/>
</dbReference>
<dbReference type="PANTHER" id="PTHR13528:SF2">
    <property type="entry name" value="LARGE RIBOSOMAL SUBUNIT PROTEIN BL28M"/>
    <property type="match status" value="1"/>
</dbReference>
<dbReference type="Pfam" id="PF00830">
    <property type="entry name" value="Ribosomal_L28"/>
    <property type="match status" value="1"/>
</dbReference>
<dbReference type="SUPFAM" id="SSF143800">
    <property type="entry name" value="L28p-like"/>
    <property type="match status" value="1"/>
</dbReference>
<gene>
    <name evidence="1" type="primary">rpmB</name>
    <name type="ordered locus">Smed_2556</name>
</gene>
<sequence length="96" mass="10563">MSRSCELTGKGVQSGNNVSHANNKTKRKFLPNLCNVTLISDALGQRFRLRVSAAALRSVEHRGGLDAFLLKADETELSMRARLLRRQIVKKAAEAA</sequence>